<sequence>MLNIGLSGSTGKMGETILERIDKFKDCKIAAKFNSTNNLDDLDNFCKNSDVIIDFSTPEILEKLINYALKHNTKLVIGTTGLQPQHFKLLEKAAQTLPVLYSANMSIGANLLSYLAKEVTKILDDYDVEILETHHRNKKDSPSGTAVMLAETIASKKGLNITFNRGNRLRSEKEIGISSLRGGNVHSIHEISFLGDDEIITLKHEALNKNSFSIGAIKAAIWLQDKPSALYSMQDIYKI</sequence>
<keyword id="KW-0028">Amino-acid biosynthesis</keyword>
<keyword id="KW-0963">Cytoplasm</keyword>
<keyword id="KW-0220">Diaminopimelate biosynthesis</keyword>
<keyword id="KW-0457">Lysine biosynthesis</keyword>
<keyword id="KW-0520">NAD</keyword>
<keyword id="KW-0521">NADP</keyword>
<keyword id="KW-0560">Oxidoreductase</keyword>
<gene>
    <name evidence="1" type="primary">dapB</name>
    <name type="ordered locus">RPR_01275</name>
</gene>
<reference key="1">
    <citation type="journal article" date="2009" name="PLoS ONE">
        <title>Genome sequence of the endosymbiont Rickettsia peacockii and comparison with virulent Rickettsia rickettsii: identification of virulence factors.</title>
        <authorList>
            <person name="Felsheim R.F."/>
            <person name="Kurtti T.J."/>
            <person name="Munderloh U.G."/>
        </authorList>
    </citation>
    <scope>NUCLEOTIDE SEQUENCE [LARGE SCALE GENOMIC DNA]</scope>
    <source>
        <strain>Rustic</strain>
    </source>
</reference>
<proteinExistence type="inferred from homology"/>
<name>DAPB_RICPU</name>
<evidence type="ECO:0000255" key="1">
    <source>
        <dbReference type="HAMAP-Rule" id="MF_00102"/>
    </source>
</evidence>
<evidence type="ECO:0000305" key="2"/>
<comment type="function">
    <text evidence="1">Catalyzes the conversion of 4-hydroxy-tetrahydrodipicolinate (HTPA) to tetrahydrodipicolinate.</text>
</comment>
<comment type="catalytic activity">
    <reaction evidence="1">
        <text>(S)-2,3,4,5-tetrahydrodipicolinate + NAD(+) + H2O = (2S,4S)-4-hydroxy-2,3,4,5-tetrahydrodipicolinate + NADH + H(+)</text>
        <dbReference type="Rhea" id="RHEA:35323"/>
        <dbReference type="ChEBI" id="CHEBI:15377"/>
        <dbReference type="ChEBI" id="CHEBI:15378"/>
        <dbReference type="ChEBI" id="CHEBI:16845"/>
        <dbReference type="ChEBI" id="CHEBI:57540"/>
        <dbReference type="ChEBI" id="CHEBI:57945"/>
        <dbReference type="ChEBI" id="CHEBI:67139"/>
        <dbReference type="EC" id="1.17.1.8"/>
    </reaction>
</comment>
<comment type="catalytic activity">
    <reaction evidence="1">
        <text>(S)-2,3,4,5-tetrahydrodipicolinate + NADP(+) + H2O = (2S,4S)-4-hydroxy-2,3,4,5-tetrahydrodipicolinate + NADPH + H(+)</text>
        <dbReference type="Rhea" id="RHEA:35331"/>
        <dbReference type="ChEBI" id="CHEBI:15377"/>
        <dbReference type="ChEBI" id="CHEBI:15378"/>
        <dbReference type="ChEBI" id="CHEBI:16845"/>
        <dbReference type="ChEBI" id="CHEBI:57783"/>
        <dbReference type="ChEBI" id="CHEBI:58349"/>
        <dbReference type="ChEBI" id="CHEBI:67139"/>
        <dbReference type="EC" id="1.17.1.8"/>
    </reaction>
</comment>
<comment type="pathway">
    <text evidence="1">Amino-acid biosynthesis; L-lysine biosynthesis via DAP pathway; (S)-tetrahydrodipicolinate from L-aspartate: step 4/4.</text>
</comment>
<comment type="subcellular location">
    <subcellularLocation>
        <location evidence="1">Cytoplasm</location>
    </subcellularLocation>
</comment>
<comment type="similarity">
    <text evidence="1">Belongs to the DapB family.</text>
</comment>
<comment type="caution">
    <text evidence="2">Was originally thought to be a dihydrodipicolinate reductase (DHDPR), catalyzing the conversion of dihydrodipicolinate to tetrahydrodipicolinate. However, it was shown in E.coli that the substrate of the enzymatic reaction is not dihydrodipicolinate (DHDP) but in fact (2S,4S)-4-hydroxy-2,3,4,5-tetrahydrodipicolinic acid (HTPA), the product released by the DapA-catalyzed reaction.</text>
</comment>
<protein>
    <recommendedName>
        <fullName evidence="1">4-hydroxy-tetrahydrodipicolinate reductase</fullName>
        <shortName evidence="1">HTPA reductase</shortName>
        <ecNumber evidence="1">1.17.1.8</ecNumber>
    </recommendedName>
</protein>
<dbReference type="EC" id="1.17.1.8" evidence="1"/>
<dbReference type="EMBL" id="CP001227">
    <property type="protein sequence ID" value="ACR47169.1"/>
    <property type="molecule type" value="Genomic_DNA"/>
</dbReference>
<dbReference type="RefSeq" id="WP_012736458.1">
    <property type="nucleotide sequence ID" value="NC_012730.1"/>
</dbReference>
<dbReference type="SMR" id="C4K0R8"/>
<dbReference type="KEGG" id="rpk:RPR_01275"/>
<dbReference type="HOGENOM" id="CLU_047479_2_2_5"/>
<dbReference type="UniPathway" id="UPA00034">
    <property type="reaction ID" value="UER00018"/>
</dbReference>
<dbReference type="Proteomes" id="UP000005015">
    <property type="component" value="Chromosome"/>
</dbReference>
<dbReference type="GO" id="GO:0005829">
    <property type="term" value="C:cytosol"/>
    <property type="evidence" value="ECO:0007669"/>
    <property type="project" value="TreeGrafter"/>
</dbReference>
<dbReference type="GO" id="GO:0008839">
    <property type="term" value="F:4-hydroxy-tetrahydrodipicolinate reductase"/>
    <property type="evidence" value="ECO:0007669"/>
    <property type="project" value="UniProtKB-EC"/>
</dbReference>
<dbReference type="GO" id="GO:0051287">
    <property type="term" value="F:NAD binding"/>
    <property type="evidence" value="ECO:0007669"/>
    <property type="project" value="UniProtKB-UniRule"/>
</dbReference>
<dbReference type="GO" id="GO:0050661">
    <property type="term" value="F:NADP binding"/>
    <property type="evidence" value="ECO:0007669"/>
    <property type="project" value="UniProtKB-UniRule"/>
</dbReference>
<dbReference type="GO" id="GO:0016726">
    <property type="term" value="F:oxidoreductase activity, acting on CH or CH2 groups, NAD or NADP as acceptor"/>
    <property type="evidence" value="ECO:0007669"/>
    <property type="project" value="UniProtKB-UniRule"/>
</dbReference>
<dbReference type="GO" id="GO:0019877">
    <property type="term" value="P:diaminopimelate biosynthetic process"/>
    <property type="evidence" value="ECO:0007669"/>
    <property type="project" value="UniProtKB-UniRule"/>
</dbReference>
<dbReference type="GO" id="GO:0009089">
    <property type="term" value="P:lysine biosynthetic process via diaminopimelate"/>
    <property type="evidence" value="ECO:0007669"/>
    <property type="project" value="UniProtKB-UniRule"/>
</dbReference>
<dbReference type="CDD" id="cd02274">
    <property type="entry name" value="DHDPR_N"/>
    <property type="match status" value="1"/>
</dbReference>
<dbReference type="Gene3D" id="3.30.360.10">
    <property type="entry name" value="Dihydrodipicolinate Reductase, domain 2"/>
    <property type="match status" value="1"/>
</dbReference>
<dbReference type="Gene3D" id="3.40.50.720">
    <property type="entry name" value="NAD(P)-binding Rossmann-like Domain"/>
    <property type="match status" value="1"/>
</dbReference>
<dbReference type="HAMAP" id="MF_00102">
    <property type="entry name" value="DapB"/>
    <property type="match status" value="1"/>
</dbReference>
<dbReference type="InterPro" id="IPR022663">
    <property type="entry name" value="DapB_C"/>
</dbReference>
<dbReference type="InterPro" id="IPR000846">
    <property type="entry name" value="DapB_N"/>
</dbReference>
<dbReference type="InterPro" id="IPR022664">
    <property type="entry name" value="DapB_N_CS"/>
</dbReference>
<dbReference type="InterPro" id="IPR023940">
    <property type="entry name" value="DHDPR_bac"/>
</dbReference>
<dbReference type="InterPro" id="IPR036291">
    <property type="entry name" value="NAD(P)-bd_dom_sf"/>
</dbReference>
<dbReference type="NCBIfam" id="TIGR00036">
    <property type="entry name" value="dapB"/>
    <property type="match status" value="1"/>
</dbReference>
<dbReference type="PANTHER" id="PTHR20836:SF0">
    <property type="entry name" value="4-HYDROXY-TETRAHYDRODIPICOLINATE REDUCTASE 1, CHLOROPLASTIC-RELATED"/>
    <property type="match status" value="1"/>
</dbReference>
<dbReference type="PANTHER" id="PTHR20836">
    <property type="entry name" value="DIHYDRODIPICOLINATE REDUCTASE"/>
    <property type="match status" value="1"/>
</dbReference>
<dbReference type="Pfam" id="PF05173">
    <property type="entry name" value="DapB_C"/>
    <property type="match status" value="1"/>
</dbReference>
<dbReference type="Pfam" id="PF01113">
    <property type="entry name" value="DapB_N"/>
    <property type="match status" value="1"/>
</dbReference>
<dbReference type="PIRSF" id="PIRSF000161">
    <property type="entry name" value="DHPR"/>
    <property type="match status" value="1"/>
</dbReference>
<dbReference type="SUPFAM" id="SSF55347">
    <property type="entry name" value="Glyceraldehyde-3-phosphate dehydrogenase-like, C-terminal domain"/>
    <property type="match status" value="1"/>
</dbReference>
<dbReference type="SUPFAM" id="SSF51735">
    <property type="entry name" value="NAD(P)-binding Rossmann-fold domains"/>
    <property type="match status" value="1"/>
</dbReference>
<dbReference type="PROSITE" id="PS01298">
    <property type="entry name" value="DAPB"/>
    <property type="match status" value="1"/>
</dbReference>
<feature type="chain" id="PRO_1000202817" description="4-hydroxy-tetrahydrodipicolinate reductase">
    <location>
        <begin position="1"/>
        <end position="239"/>
    </location>
</feature>
<feature type="active site" description="Proton donor/acceptor" evidence="1">
    <location>
        <position position="134"/>
    </location>
</feature>
<feature type="active site" description="Proton donor" evidence="1">
    <location>
        <position position="138"/>
    </location>
</feature>
<feature type="binding site" evidence="1">
    <location>
        <begin position="8"/>
        <end position="13"/>
    </location>
    <ligand>
        <name>NAD(+)</name>
        <dbReference type="ChEBI" id="CHEBI:57540"/>
    </ligand>
</feature>
<feature type="binding site" evidence="1">
    <location>
        <begin position="78"/>
        <end position="80"/>
    </location>
    <ligand>
        <name>NAD(+)</name>
        <dbReference type="ChEBI" id="CHEBI:57540"/>
    </ligand>
</feature>
<feature type="binding site" evidence="1">
    <location>
        <begin position="102"/>
        <end position="105"/>
    </location>
    <ligand>
        <name>NAD(+)</name>
        <dbReference type="ChEBI" id="CHEBI:57540"/>
    </ligand>
</feature>
<feature type="binding site" evidence="1">
    <location>
        <position position="135"/>
    </location>
    <ligand>
        <name>(S)-2,3,4,5-tetrahydrodipicolinate</name>
        <dbReference type="ChEBI" id="CHEBI:16845"/>
    </ligand>
</feature>
<feature type="binding site" evidence="1">
    <location>
        <begin position="144"/>
        <end position="145"/>
    </location>
    <ligand>
        <name>(S)-2,3,4,5-tetrahydrodipicolinate</name>
        <dbReference type="ChEBI" id="CHEBI:16845"/>
    </ligand>
</feature>
<organism>
    <name type="scientific">Rickettsia peacockii (strain Rustic)</name>
    <dbReference type="NCBI Taxonomy" id="562019"/>
    <lineage>
        <taxon>Bacteria</taxon>
        <taxon>Pseudomonadati</taxon>
        <taxon>Pseudomonadota</taxon>
        <taxon>Alphaproteobacteria</taxon>
        <taxon>Rickettsiales</taxon>
        <taxon>Rickettsiaceae</taxon>
        <taxon>Rickettsieae</taxon>
        <taxon>Rickettsia</taxon>
        <taxon>spotted fever group</taxon>
    </lineage>
</organism>
<accession>C4K0R8</accession>